<comment type="function">
    <text evidence="1">Transcriptional repressor for the arsEFG operon. ArsE is a trans-acting regulatory protein which controls its own expression. The repressive effect of ArsE is alleviated by oxyions of +III oxidation state of arsenic, antimony, and bismuth, as well as arsenate (As(V)) (By similarity).</text>
</comment>
<comment type="subunit">
    <text evidence="1">Binds DNA as a homodimer.</text>
</comment>
<name>ARSR_ECOLI</name>
<keyword id="KW-0059">Arsenical resistance</keyword>
<keyword id="KW-0238">DNA-binding</keyword>
<keyword id="KW-1185">Reference proteome</keyword>
<keyword id="KW-0678">Repressor</keyword>
<keyword id="KW-0804">Transcription</keyword>
<keyword id="KW-0805">Transcription regulation</keyword>
<gene>
    <name type="primary">arsR</name>
    <name type="synonym">arsE</name>
    <name type="ordered locus">b3501</name>
    <name type="ordered locus">JW3468</name>
</gene>
<evidence type="ECO:0000250" key="1"/>
<evidence type="ECO:0000255" key="2">
    <source>
        <dbReference type="PROSITE-ProRule" id="PRU00340"/>
    </source>
</evidence>
<reference key="1">
    <citation type="journal article" date="1995" name="J. Bacteriol.">
        <title>An Escherichia coli chromosomal ars operon homolog is functional in arsenic detoxification and is conserved in Gram-negative bacteria.</title>
        <authorList>
            <person name="Diorio C."/>
            <person name="Cai J."/>
            <person name="Marmor J."/>
            <person name="Shinder R."/>
            <person name="Dubow M.S."/>
        </authorList>
    </citation>
    <scope>NUCLEOTIDE SEQUENCE [GENOMIC DNA]</scope>
    <source>
        <strain>K12</strain>
    </source>
</reference>
<reference key="2">
    <citation type="journal article" date="1994" name="Nucleic Acids Res.">
        <title>Analysis of the Escherichia coli genome. V. DNA sequence of the region from 76.0 to 81.5 minutes.</title>
        <authorList>
            <person name="Sofia H.J."/>
            <person name="Burland V."/>
            <person name="Daniels D.L."/>
            <person name="Plunkett G. III"/>
            <person name="Blattner F.R."/>
        </authorList>
    </citation>
    <scope>NUCLEOTIDE SEQUENCE [LARGE SCALE GENOMIC DNA]</scope>
    <source>
        <strain>K12 / MG1655 / ATCC 47076</strain>
    </source>
</reference>
<reference key="3">
    <citation type="journal article" date="1997" name="Science">
        <title>The complete genome sequence of Escherichia coli K-12.</title>
        <authorList>
            <person name="Blattner F.R."/>
            <person name="Plunkett G. III"/>
            <person name="Bloch C.A."/>
            <person name="Perna N.T."/>
            <person name="Burland V."/>
            <person name="Riley M."/>
            <person name="Collado-Vides J."/>
            <person name="Glasner J.D."/>
            <person name="Rode C.K."/>
            <person name="Mayhew G.F."/>
            <person name="Gregor J."/>
            <person name="Davis N.W."/>
            <person name="Kirkpatrick H.A."/>
            <person name="Goeden M.A."/>
            <person name="Rose D.J."/>
            <person name="Mau B."/>
            <person name="Shao Y."/>
        </authorList>
    </citation>
    <scope>NUCLEOTIDE SEQUENCE [LARGE SCALE GENOMIC DNA]</scope>
    <source>
        <strain>K12 / MG1655 / ATCC 47076</strain>
    </source>
</reference>
<reference key="4">
    <citation type="journal article" date="2006" name="Mol. Syst. Biol.">
        <title>Highly accurate genome sequences of Escherichia coli K-12 strains MG1655 and W3110.</title>
        <authorList>
            <person name="Hayashi K."/>
            <person name="Morooka N."/>
            <person name="Yamamoto Y."/>
            <person name="Fujita K."/>
            <person name="Isono K."/>
            <person name="Choi S."/>
            <person name="Ohtsubo E."/>
            <person name="Baba T."/>
            <person name="Wanner B.L."/>
            <person name="Mori H."/>
            <person name="Horiuchi T."/>
        </authorList>
    </citation>
    <scope>NUCLEOTIDE SEQUENCE [LARGE SCALE GENOMIC DNA]</scope>
    <source>
        <strain>K12 / W3110 / ATCC 27325 / DSM 5911</strain>
    </source>
</reference>
<proteinExistence type="inferred from homology"/>
<accession>P37309</accession>
<accession>Q2M7G3</accession>
<sequence length="117" mass="13253">MSFLLPIQLFKILADETRLGIVLLLSELGELCVCDLCTALDQSQPKISRHLALLRESGLLLDRKQGKWVHYRLSPHIPAWAAKIIDEAWRCEQEKVQAIVRNLARQNCSGDSKNICS</sequence>
<protein>
    <recommendedName>
        <fullName>Arsenical resistance operon repressor</fullName>
    </recommendedName>
</protein>
<feature type="chain" id="PRO_0000160613" description="Arsenical resistance operon repressor">
    <location>
        <begin position="1"/>
        <end position="117"/>
    </location>
</feature>
<feature type="domain" description="HTH arsR-type" evidence="2">
    <location>
        <begin position="1"/>
        <end position="92"/>
    </location>
</feature>
<feature type="DNA-binding region" description="H-T-H motif" evidence="2">
    <location>
        <begin position="33"/>
        <end position="52"/>
    </location>
</feature>
<dbReference type="EMBL" id="X80057">
    <property type="protein sequence ID" value="CAA56361.1"/>
    <property type="molecule type" value="Genomic_DNA"/>
</dbReference>
<dbReference type="EMBL" id="U00039">
    <property type="protein sequence ID" value="AAB18477.1"/>
    <property type="molecule type" value="Genomic_DNA"/>
</dbReference>
<dbReference type="EMBL" id="U00096">
    <property type="protein sequence ID" value="AAC76526.1"/>
    <property type="molecule type" value="Genomic_DNA"/>
</dbReference>
<dbReference type="EMBL" id="AP009048">
    <property type="protein sequence ID" value="BAE77793.1"/>
    <property type="molecule type" value="Genomic_DNA"/>
</dbReference>
<dbReference type="PIR" id="A56269">
    <property type="entry name" value="A56269"/>
</dbReference>
<dbReference type="RefSeq" id="NP_417958.1">
    <property type="nucleotide sequence ID" value="NC_000913.3"/>
</dbReference>
<dbReference type="RefSeq" id="WP_000008957.1">
    <property type="nucleotide sequence ID" value="NZ_STEB01000046.1"/>
</dbReference>
<dbReference type="SMR" id="P37309"/>
<dbReference type="BioGRID" id="4261323">
    <property type="interactions" value="98"/>
</dbReference>
<dbReference type="BioGRID" id="852321">
    <property type="interactions" value="1"/>
</dbReference>
<dbReference type="DIP" id="DIP-9163N"/>
<dbReference type="FunCoup" id="P37309">
    <property type="interactions" value="350"/>
</dbReference>
<dbReference type="IntAct" id="P37309">
    <property type="interactions" value="3"/>
</dbReference>
<dbReference type="STRING" id="511145.b3501"/>
<dbReference type="PaxDb" id="511145-b3501"/>
<dbReference type="EnsemblBacteria" id="AAC76526">
    <property type="protein sequence ID" value="AAC76526"/>
    <property type="gene ID" value="b3501"/>
</dbReference>
<dbReference type="GeneID" id="93778491"/>
<dbReference type="GeneID" id="948013"/>
<dbReference type="KEGG" id="ecj:JW3468"/>
<dbReference type="KEGG" id="eco:b3501"/>
<dbReference type="KEGG" id="ecoc:C3026_18965"/>
<dbReference type="PATRIC" id="fig|1411691.4.peg.3219"/>
<dbReference type="EchoBASE" id="EB2147"/>
<dbReference type="eggNOG" id="COG0640">
    <property type="taxonomic scope" value="Bacteria"/>
</dbReference>
<dbReference type="HOGENOM" id="CLU_097806_3_1_6"/>
<dbReference type="InParanoid" id="P37309"/>
<dbReference type="OMA" id="DGREHCV"/>
<dbReference type="OrthoDB" id="9793058at2"/>
<dbReference type="PhylomeDB" id="P37309"/>
<dbReference type="BioCyc" id="EcoCyc:EG12235-MONOMER"/>
<dbReference type="BioCyc" id="MetaCyc:EG12235-MONOMER"/>
<dbReference type="PRO" id="PR:P37309"/>
<dbReference type="Proteomes" id="UP000000625">
    <property type="component" value="Chromosome"/>
</dbReference>
<dbReference type="GO" id="GO:0003677">
    <property type="term" value="F:DNA binding"/>
    <property type="evidence" value="ECO:0000314"/>
    <property type="project" value="EcoCyc"/>
</dbReference>
<dbReference type="GO" id="GO:0003700">
    <property type="term" value="F:DNA-binding transcription factor activity"/>
    <property type="evidence" value="ECO:0007669"/>
    <property type="project" value="InterPro"/>
</dbReference>
<dbReference type="GO" id="GO:0006351">
    <property type="term" value="P:DNA-templated transcription"/>
    <property type="evidence" value="ECO:0000269"/>
    <property type="project" value="EcoCyc"/>
</dbReference>
<dbReference type="GO" id="GO:0006355">
    <property type="term" value="P:regulation of DNA-templated transcription"/>
    <property type="evidence" value="ECO:0000314"/>
    <property type="project" value="EcoCyc"/>
</dbReference>
<dbReference type="GO" id="GO:0046685">
    <property type="term" value="P:response to arsenic-containing substance"/>
    <property type="evidence" value="ECO:0000314"/>
    <property type="project" value="EcoCyc"/>
</dbReference>
<dbReference type="CDD" id="cd00090">
    <property type="entry name" value="HTH_ARSR"/>
    <property type="match status" value="1"/>
</dbReference>
<dbReference type="FunFam" id="1.10.10.10:FF:000279">
    <property type="entry name" value="Transcriptional regulator, ArsR family"/>
    <property type="match status" value="1"/>
</dbReference>
<dbReference type="Gene3D" id="1.10.10.10">
    <property type="entry name" value="Winged helix-like DNA-binding domain superfamily/Winged helix DNA-binding domain"/>
    <property type="match status" value="1"/>
</dbReference>
<dbReference type="InterPro" id="IPR011991">
    <property type="entry name" value="ArsR-like_HTH"/>
</dbReference>
<dbReference type="InterPro" id="IPR018334">
    <property type="entry name" value="ArsR_HTH"/>
</dbReference>
<dbReference type="InterPro" id="IPR001845">
    <property type="entry name" value="HTH_ArsR_DNA-bd_dom"/>
</dbReference>
<dbReference type="InterPro" id="IPR051081">
    <property type="entry name" value="HTH_MetalResp_TranReg"/>
</dbReference>
<dbReference type="InterPro" id="IPR036388">
    <property type="entry name" value="WH-like_DNA-bd_sf"/>
</dbReference>
<dbReference type="InterPro" id="IPR036390">
    <property type="entry name" value="WH_DNA-bd_sf"/>
</dbReference>
<dbReference type="NCBIfam" id="NF033788">
    <property type="entry name" value="HTH_metalloreg"/>
    <property type="match status" value="1"/>
</dbReference>
<dbReference type="NCBIfam" id="NF007528">
    <property type="entry name" value="PRK10141.1"/>
    <property type="match status" value="1"/>
</dbReference>
<dbReference type="PANTHER" id="PTHR33154:SF18">
    <property type="entry name" value="ARSENICAL RESISTANCE OPERON REPRESSOR"/>
    <property type="match status" value="1"/>
</dbReference>
<dbReference type="PANTHER" id="PTHR33154">
    <property type="entry name" value="TRANSCRIPTIONAL REGULATOR, ARSR FAMILY"/>
    <property type="match status" value="1"/>
</dbReference>
<dbReference type="Pfam" id="PF01022">
    <property type="entry name" value="HTH_5"/>
    <property type="match status" value="1"/>
</dbReference>
<dbReference type="PRINTS" id="PR00778">
    <property type="entry name" value="HTHARSR"/>
</dbReference>
<dbReference type="SMART" id="SM00418">
    <property type="entry name" value="HTH_ARSR"/>
    <property type="match status" value="1"/>
</dbReference>
<dbReference type="SUPFAM" id="SSF46785">
    <property type="entry name" value="Winged helix' DNA-binding domain"/>
    <property type="match status" value="1"/>
</dbReference>
<dbReference type="PROSITE" id="PS00846">
    <property type="entry name" value="HTH_ARSR_1"/>
    <property type="match status" value="1"/>
</dbReference>
<dbReference type="PROSITE" id="PS50987">
    <property type="entry name" value="HTH_ARSR_2"/>
    <property type="match status" value="1"/>
</dbReference>
<organism>
    <name type="scientific">Escherichia coli (strain K12)</name>
    <dbReference type="NCBI Taxonomy" id="83333"/>
    <lineage>
        <taxon>Bacteria</taxon>
        <taxon>Pseudomonadati</taxon>
        <taxon>Pseudomonadota</taxon>
        <taxon>Gammaproteobacteria</taxon>
        <taxon>Enterobacterales</taxon>
        <taxon>Enterobacteriaceae</taxon>
        <taxon>Escherichia</taxon>
    </lineage>
</organism>